<sequence>MPRANEIKKGMVLNYNGKLLLVKDIDIQSPTARGAATLYKMRFSDVRTGLKVEERFKGDDIVDTVTLTRRYVDFSYVDGNEYVFMDKEDYTPYTFTKDQIEEELLFMPEGGMPDMQVLTWDGQLLALELPQTVDLEIVETAPGIKGASASARNKPATLSTGLVIQVPEYLSPGEKIRIHIEERRYMGRAD</sequence>
<proteinExistence type="inferred from homology"/>
<gene>
    <name evidence="1" type="primary">yeiP</name>
    <name type="ordered locus">ECIAI39_2312</name>
</gene>
<comment type="similarity">
    <text evidence="1">Belongs to the elongation factor P family.</text>
</comment>
<reference key="1">
    <citation type="journal article" date="2009" name="PLoS Genet.">
        <title>Organised genome dynamics in the Escherichia coli species results in highly diverse adaptive paths.</title>
        <authorList>
            <person name="Touchon M."/>
            <person name="Hoede C."/>
            <person name="Tenaillon O."/>
            <person name="Barbe V."/>
            <person name="Baeriswyl S."/>
            <person name="Bidet P."/>
            <person name="Bingen E."/>
            <person name="Bonacorsi S."/>
            <person name="Bouchier C."/>
            <person name="Bouvet O."/>
            <person name="Calteau A."/>
            <person name="Chiapello H."/>
            <person name="Clermont O."/>
            <person name="Cruveiller S."/>
            <person name="Danchin A."/>
            <person name="Diard M."/>
            <person name="Dossat C."/>
            <person name="Karoui M.E."/>
            <person name="Frapy E."/>
            <person name="Garry L."/>
            <person name="Ghigo J.M."/>
            <person name="Gilles A.M."/>
            <person name="Johnson J."/>
            <person name="Le Bouguenec C."/>
            <person name="Lescat M."/>
            <person name="Mangenot S."/>
            <person name="Martinez-Jehanne V."/>
            <person name="Matic I."/>
            <person name="Nassif X."/>
            <person name="Oztas S."/>
            <person name="Petit M.A."/>
            <person name="Pichon C."/>
            <person name="Rouy Z."/>
            <person name="Ruf C.S."/>
            <person name="Schneider D."/>
            <person name="Tourret J."/>
            <person name="Vacherie B."/>
            <person name="Vallenet D."/>
            <person name="Medigue C."/>
            <person name="Rocha E.P.C."/>
            <person name="Denamur E."/>
        </authorList>
    </citation>
    <scope>NUCLEOTIDE SEQUENCE [LARGE SCALE GENOMIC DNA]</scope>
    <source>
        <strain>IAI39 / ExPEC</strain>
    </source>
</reference>
<protein>
    <recommendedName>
        <fullName evidence="1">Elongation factor P-like protein</fullName>
    </recommendedName>
</protein>
<dbReference type="EMBL" id="CU928164">
    <property type="protein sequence ID" value="CAR18438.1"/>
    <property type="molecule type" value="Genomic_DNA"/>
</dbReference>
<dbReference type="RefSeq" id="WP_001136827.1">
    <property type="nucleotide sequence ID" value="NC_011750.1"/>
</dbReference>
<dbReference type="RefSeq" id="YP_002408272.1">
    <property type="nucleotide sequence ID" value="NC_011750.1"/>
</dbReference>
<dbReference type="SMR" id="B7NMY6"/>
<dbReference type="STRING" id="585057.ECIAI39_2312"/>
<dbReference type="GeneID" id="93775010"/>
<dbReference type="KEGG" id="ect:ECIAI39_2312"/>
<dbReference type="PATRIC" id="fig|585057.6.peg.2409"/>
<dbReference type="HOGENOM" id="CLU_074944_2_0_6"/>
<dbReference type="Proteomes" id="UP000000749">
    <property type="component" value="Chromosome"/>
</dbReference>
<dbReference type="GO" id="GO:0005829">
    <property type="term" value="C:cytosol"/>
    <property type="evidence" value="ECO:0007669"/>
    <property type="project" value="UniProtKB-ARBA"/>
</dbReference>
<dbReference type="GO" id="GO:0003746">
    <property type="term" value="F:translation elongation factor activity"/>
    <property type="evidence" value="ECO:0007669"/>
    <property type="project" value="UniProtKB-UniRule"/>
</dbReference>
<dbReference type="GO" id="GO:0043043">
    <property type="term" value="P:peptide biosynthetic process"/>
    <property type="evidence" value="ECO:0007669"/>
    <property type="project" value="InterPro"/>
</dbReference>
<dbReference type="CDD" id="cd04470">
    <property type="entry name" value="S1_EF-P_repeat_1"/>
    <property type="match status" value="1"/>
</dbReference>
<dbReference type="CDD" id="cd05794">
    <property type="entry name" value="S1_EF-P_repeat_2"/>
    <property type="match status" value="1"/>
</dbReference>
<dbReference type="FunFam" id="2.40.50.140:FF:000004">
    <property type="entry name" value="Elongation factor P"/>
    <property type="match status" value="1"/>
</dbReference>
<dbReference type="FunFam" id="2.30.30.30:FF:000011">
    <property type="entry name" value="Elongation factor P-like protein"/>
    <property type="match status" value="1"/>
</dbReference>
<dbReference type="FunFam" id="2.40.50.140:FF:000053">
    <property type="entry name" value="Elongation factor P-like protein"/>
    <property type="match status" value="1"/>
</dbReference>
<dbReference type="Gene3D" id="2.30.30.30">
    <property type="match status" value="1"/>
</dbReference>
<dbReference type="Gene3D" id="2.40.50.140">
    <property type="entry name" value="Nucleic acid-binding proteins"/>
    <property type="match status" value="2"/>
</dbReference>
<dbReference type="HAMAP" id="MF_00646">
    <property type="entry name" value="EFP"/>
    <property type="match status" value="1"/>
</dbReference>
<dbReference type="InterPro" id="IPR015365">
    <property type="entry name" value="Elong-fact-P_C"/>
</dbReference>
<dbReference type="InterPro" id="IPR012340">
    <property type="entry name" value="NA-bd_OB-fold"/>
</dbReference>
<dbReference type="InterPro" id="IPR014722">
    <property type="entry name" value="Rib_uL2_dom2"/>
</dbReference>
<dbReference type="InterPro" id="IPR020599">
    <property type="entry name" value="Transl_elong_fac_P/YeiP"/>
</dbReference>
<dbReference type="InterPro" id="IPR013185">
    <property type="entry name" value="Transl_elong_KOW-like"/>
</dbReference>
<dbReference type="InterPro" id="IPR011897">
    <property type="entry name" value="Transl_elong_p-like_YeiP"/>
</dbReference>
<dbReference type="InterPro" id="IPR001059">
    <property type="entry name" value="Transl_elong_P/YeiP_cen"/>
</dbReference>
<dbReference type="InterPro" id="IPR013852">
    <property type="entry name" value="Transl_elong_P/YeiP_CS"/>
</dbReference>
<dbReference type="InterPro" id="IPR008991">
    <property type="entry name" value="Translation_prot_SH3-like_sf"/>
</dbReference>
<dbReference type="NCBIfam" id="NF001810">
    <property type="entry name" value="PRK00529.1"/>
    <property type="match status" value="1"/>
</dbReference>
<dbReference type="NCBIfam" id="NF003392">
    <property type="entry name" value="PRK04542.1"/>
    <property type="match status" value="1"/>
</dbReference>
<dbReference type="NCBIfam" id="TIGR02178">
    <property type="entry name" value="yeiP"/>
    <property type="match status" value="1"/>
</dbReference>
<dbReference type="PANTHER" id="PTHR30053">
    <property type="entry name" value="ELONGATION FACTOR P"/>
    <property type="match status" value="1"/>
</dbReference>
<dbReference type="PANTHER" id="PTHR30053:SF14">
    <property type="entry name" value="TRANSLATION ELONGATION FACTOR KOW-LIKE DOMAIN-CONTAINING PROTEIN"/>
    <property type="match status" value="1"/>
</dbReference>
<dbReference type="Pfam" id="PF01132">
    <property type="entry name" value="EFP"/>
    <property type="match status" value="1"/>
</dbReference>
<dbReference type="Pfam" id="PF08207">
    <property type="entry name" value="EFP_N"/>
    <property type="match status" value="1"/>
</dbReference>
<dbReference type="Pfam" id="PF09285">
    <property type="entry name" value="Elong-fact-P_C"/>
    <property type="match status" value="1"/>
</dbReference>
<dbReference type="PIRSF" id="PIRSF005901">
    <property type="entry name" value="EF-P"/>
    <property type="match status" value="1"/>
</dbReference>
<dbReference type="SMART" id="SM01185">
    <property type="entry name" value="EFP"/>
    <property type="match status" value="1"/>
</dbReference>
<dbReference type="SMART" id="SM00841">
    <property type="entry name" value="Elong-fact-P_C"/>
    <property type="match status" value="1"/>
</dbReference>
<dbReference type="SUPFAM" id="SSF50249">
    <property type="entry name" value="Nucleic acid-binding proteins"/>
    <property type="match status" value="2"/>
</dbReference>
<dbReference type="SUPFAM" id="SSF50104">
    <property type="entry name" value="Translation proteins SH3-like domain"/>
    <property type="match status" value="1"/>
</dbReference>
<dbReference type="PROSITE" id="PS01275">
    <property type="entry name" value="EFP"/>
    <property type="match status" value="1"/>
</dbReference>
<name>EFPL_ECO7I</name>
<evidence type="ECO:0000255" key="1">
    <source>
        <dbReference type="HAMAP-Rule" id="MF_00646"/>
    </source>
</evidence>
<accession>B7NMY6</accession>
<feature type="chain" id="PRO_1000130914" description="Elongation factor P-like protein">
    <location>
        <begin position="1"/>
        <end position="190"/>
    </location>
</feature>
<organism>
    <name type="scientific">Escherichia coli O7:K1 (strain IAI39 / ExPEC)</name>
    <dbReference type="NCBI Taxonomy" id="585057"/>
    <lineage>
        <taxon>Bacteria</taxon>
        <taxon>Pseudomonadati</taxon>
        <taxon>Pseudomonadota</taxon>
        <taxon>Gammaproteobacteria</taxon>
        <taxon>Enterobacterales</taxon>
        <taxon>Enterobacteriaceae</taxon>
        <taxon>Escherichia</taxon>
    </lineage>
</organism>